<comment type="function">
    <text evidence="1 5">Exhibits ATPase activity. Binds DNA/RNA in a non-specific manner and exhibits endonuclease activity. Probably involved in DNA repair. Involved in RNA-directed DNA methylation (RdDM) as a component of the RdDM machinery and required for gene silencing. May also be involved in the regulation of chromatin architecture to maintain gene silencing. Together with MORC7, acts to suppress a wide set of non-methylated protein-coding genes, especially involved in pathogen response. Positive regulator of defense against the oomycete Hyaloperonospora arabidopsidis (Hpa) (PubMed:27171361).</text>
</comment>
<comment type="cofactor">
    <cofactor evidence="1">
        <name>Mg(2+)</name>
        <dbReference type="ChEBI" id="CHEBI:18420"/>
    </cofactor>
    <cofactor evidence="1">
        <name>Mn(2+)</name>
        <dbReference type="ChEBI" id="CHEBI:29035"/>
    </cofactor>
</comment>
<comment type="subunit">
    <text evidence="1 5">Homodimer and heterodimer. Component of an RNA-directed DNA methylation (RdDM) complex. Forms homomeric complexes (PubMed:27171361).</text>
</comment>
<comment type="subcellular location">
    <subcellularLocation>
        <location evidence="3 5">Nucleus</location>
    </subcellularLocation>
    <text evidence="5">Accumulates in discrete nuclear bodies adjacent to chromocenters.</text>
</comment>
<comment type="disruption phenotype">
    <text evidence="5">The double mutant atmorc4 atmorc7 exhibits a pathogen response phenotype with abnormal up-regulation of several genes involved in plant defense.</text>
</comment>
<comment type="similarity">
    <text evidence="8">Belongs to the MORC ATPase protein family.</text>
</comment>
<comment type="sequence caution" evidence="8">
    <conflict type="erroneous gene model prediction">
        <sequence resource="EMBL-CDS" id="AED95991"/>
    </conflict>
</comment>
<comment type="sequence caution" evidence="8">
    <conflict type="erroneous gene model prediction">
        <sequence resource="EMBL-CDS" id="BAA96991"/>
    </conflict>
</comment>
<evidence type="ECO:0000250" key="1">
    <source>
        <dbReference type="UniProtKB" id="Q84WV6"/>
    </source>
</evidence>
<evidence type="ECO:0000255" key="2"/>
<evidence type="ECO:0000255" key="3">
    <source>
        <dbReference type="PROSITE-ProRule" id="PRU00768"/>
    </source>
</evidence>
<evidence type="ECO:0000256" key="4">
    <source>
        <dbReference type="SAM" id="MobiDB-lite"/>
    </source>
</evidence>
<evidence type="ECO:0000269" key="5">
    <source>
    </source>
</evidence>
<evidence type="ECO:0000303" key="6">
    <source>
    </source>
</evidence>
<evidence type="ECO:0000303" key="7">
    <source>
    </source>
</evidence>
<evidence type="ECO:0000305" key="8"/>
<evidence type="ECO:0000312" key="9">
    <source>
        <dbReference type="Araport" id="AT5G50780"/>
    </source>
</evidence>
<evidence type="ECO:0000312" key="10">
    <source>
        <dbReference type="EMBL" id="BAA96991.2"/>
    </source>
</evidence>
<evidence type="ECO:0000312" key="11">
    <source>
        <dbReference type="Proteomes" id="UP000006548"/>
    </source>
</evidence>
<gene>
    <name evidence="7" type="primary">MORC4</name>
    <name evidence="6" type="synonym">CRH4</name>
    <name evidence="9" type="ordered locus">At5g50780</name>
    <name evidence="10" type="ORF">MFB16.18</name>
</gene>
<dbReference type="EC" id="3.6.-.-"/>
<dbReference type="EMBL" id="AB023037">
    <property type="protein sequence ID" value="BAA96991.2"/>
    <property type="status" value="ALT_SEQ"/>
    <property type="molecule type" value="Genomic_DNA"/>
</dbReference>
<dbReference type="EMBL" id="CP002688">
    <property type="protein sequence ID" value="AED95991.1"/>
    <property type="status" value="ALT_SEQ"/>
    <property type="molecule type" value="Genomic_DNA"/>
</dbReference>
<dbReference type="RefSeq" id="NP_199891.4">
    <property type="nucleotide sequence ID" value="NM_124456.4"/>
</dbReference>
<dbReference type="SMR" id="F4KAF2"/>
<dbReference type="FunCoup" id="F4KAF2">
    <property type="interactions" value="1768"/>
</dbReference>
<dbReference type="STRING" id="3702.F4KAF2"/>
<dbReference type="PaxDb" id="3702-AT5G50780.1"/>
<dbReference type="PeptideAtlas" id="F4KAF2"/>
<dbReference type="GeneID" id="835150"/>
<dbReference type="KEGG" id="ath:AT5G50780"/>
<dbReference type="Araport" id="AT5G50780"/>
<dbReference type="TAIR" id="AT5G50780">
    <property type="gene designation" value="ATMORC4"/>
</dbReference>
<dbReference type="eggNOG" id="KOG1845">
    <property type="taxonomic scope" value="Eukaryota"/>
</dbReference>
<dbReference type="HOGENOM" id="CLU_011516_6_0_1"/>
<dbReference type="InParanoid" id="F4KAF2"/>
<dbReference type="PRO" id="PR:F4KAF2"/>
<dbReference type="Proteomes" id="UP000006548">
    <property type="component" value="Chromosome 5"/>
</dbReference>
<dbReference type="ExpressionAtlas" id="F4KAF2">
    <property type="expression patterns" value="baseline and differential"/>
</dbReference>
<dbReference type="GO" id="GO:0016604">
    <property type="term" value="C:nuclear body"/>
    <property type="evidence" value="ECO:0000314"/>
    <property type="project" value="UniProtKB"/>
</dbReference>
<dbReference type="GO" id="GO:0005654">
    <property type="term" value="C:nucleoplasm"/>
    <property type="evidence" value="ECO:0000314"/>
    <property type="project" value="TAIR"/>
</dbReference>
<dbReference type="GO" id="GO:0005634">
    <property type="term" value="C:nucleus"/>
    <property type="evidence" value="ECO:0000250"/>
    <property type="project" value="UniProtKB"/>
</dbReference>
<dbReference type="GO" id="GO:0005524">
    <property type="term" value="F:ATP binding"/>
    <property type="evidence" value="ECO:0007669"/>
    <property type="project" value="UniProtKB-KW"/>
</dbReference>
<dbReference type="GO" id="GO:0016887">
    <property type="term" value="F:ATP hydrolysis activity"/>
    <property type="evidence" value="ECO:0000250"/>
    <property type="project" value="UniProtKB"/>
</dbReference>
<dbReference type="GO" id="GO:0003677">
    <property type="term" value="F:DNA binding"/>
    <property type="evidence" value="ECO:0000250"/>
    <property type="project" value="UniProtKB"/>
</dbReference>
<dbReference type="GO" id="GO:0004519">
    <property type="term" value="F:endonuclease activity"/>
    <property type="evidence" value="ECO:0000250"/>
    <property type="project" value="UniProtKB"/>
</dbReference>
<dbReference type="GO" id="GO:0016301">
    <property type="term" value="F:kinase activity"/>
    <property type="evidence" value="ECO:0007669"/>
    <property type="project" value="UniProtKB-KW"/>
</dbReference>
<dbReference type="GO" id="GO:0003723">
    <property type="term" value="F:RNA binding"/>
    <property type="evidence" value="ECO:0000250"/>
    <property type="project" value="UniProtKB"/>
</dbReference>
<dbReference type="GO" id="GO:0006952">
    <property type="term" value="P:defense response"/>
    <property type="evidence" value="ECO:0007669"/>
    <property type="project" value="UniProtKB-KW"/>
</dbReference>
<dbReference type="GO" id="GO:0006281">
    <property type="term" value="P:DNA repair"/>
    <property type="evidence" value="ECO:0007669"/>
    <property type="project" value="UniProtKB-KW"/>
</dbReference>
<dbReference type="GO" id="GO:0080188">
    <property type="term" value="P:gene silencing by siRNA-directed DNA methylation"/>
    <property type="evidence" value="ECO:0000315"/>
    <property type="project" value="UniProtKB"/>
</dbReference>
<dbReference type="GO" id="GO:1902290">
    <property type="term" value="P:positive regulation of defense response to oomycetes"/>
    <property type="evidence" value="ECO:0000315"/>
    <property type="project" value="UniProtKB"/>
</dbReference>
<dbReference type="GO" id="GO:0006282">
    <property type="term" value="P:regulation of DNA repair"/>
    <property type="evidence" value="ECO:0000250"/>
    <property type="project" value="UniProtKB"/>
</dbReference>
<dbReference type="GO" id="GO:0060966">
    <property type="term" value="P:regulation of gene silencing by regulatory ncRNA"/>
    <property type="evidence" value="ECO:0000250"/>
    <property type="project" value="UniProtKB"/>
</dbReference>
<dbReference type="FunFam" id="3.30.565.10:FF:000075">
    <property type="entry name" value="MORC family CW-type zinc finger protein 4"/>
    <property type="match status" value="1"/>
</dbReference>
<dbReference type="Gene3D" id="3.30.565.10">
    <property type="entry name" value="Histidine kinase-like ATPase, C-terminal domain"/>
    <property type="match status" value="1"/>
</dbReference>
<dbReference type="InterPro" id="IPR036890">
    <property type="entry name" value="HATPase_C_sf"/>
</dbReference>
<dbReference type="InterPro" id="IPR045261">
    <property type="entry name" value="MORC_ATPase"/>
</dbReference>
<dbReference type="InterPro" id="IPR041006">
    <property type="entry name" value="Morc_S5"/>
</dbReference>
<dbReference type="PANTHER" id="PTHR23336:SF58">
    <property type="entry name" value="PROTEIN MICRORCHIDIA 4"/>
    <property type="match status" value="1"/>
</dbReference>
<dbReference type="PANTHER" id="PTHR23336">
    <property type="entry name" value="ZINC FINGER CW-TYPE COILED-COIL DOMAIN PROTEIN 3"/>
    <property type="match status" value="1"/>
</dbReference>
<dbReference type="Pfam" id="PF13589">
    <property type="entry name" value="HATPase_c_3"/>
    <property type="match status" value="1"/>
</dbReference>
<dbReference type="Pfam" id="PF17942">
    <property type="entry name" value="Morc6_S5"/>
    <property type="match status" value="1"/>
</dbReference>
<dbReference type="SUPFAM" id="SSF55874">
    <property type="entry name" value="ATPase domain of HSP90 chaperone/DNA topoisomerase II/histidine kinase"/>
    <property type="match status" value="1"/>
</dbReference>
<proteinExistence type="evidence at protein level"/>
<organism evidence="11">
    <name type="scientific">Arabidopsis thaliana</name>
    <name type="common">Mouse-ear cress</name>
    <dbReference type="NCBI Taxonomy" id="3702"/>
    <lineage>
        <taxon>Eukaryota</taxon>
        <taxon>Viridiplantae</taxon>
        <taxon>Streptophyta</taxon>
        <taxon>Embryophyta</taxon>
        <taxon>Tracheophyta</taxon>
        <taxon>Spermatophyta</taxon>
        <taxon>Magnoliopsida</taxon>
        <taxon>eudicotyledons</taxon>
        <taxon>Gunneridae</taxon>
        <taxon>Pentapetalae</taxon>
        <taxon>rosids</taxon>
        <taxon>malvids</taxon>
        <taxon>Brassicales</taxon>
        <taxon>Brassicaceae</taxon>
        <taxon>Camelineae</taxon>
        <taxon>Arabidopsis</taxon>
    </lineage>
</organism>
<keyword id="KW-0067">ATP-binding</keyword>
<keyword id="KW-0156">Chromatin regulator</keyword>
<keyword id="KW-0175">Coiled coil</keyword>
<keyword id="KW-0227">DNA damage</keyword>
<keyword id="KW-0234">DNA repair</keyword>
<keyword id="KW-0238">DNA-binding</keyword>
<keyword id="KW-0255">Endonuclease</keyword>
<keyword id="KW-0378">Hydrolase</keyword>
<keyword id="KW-0418">Kinase</keyword>
<keyword id="KW-0540">Nuclease</keyword>
<keyword id="KW-0547">Nucleotide-binding</keyword>
<keyword id="KW-0539">Nucleus</keyword>
<keyword id="KW-0611">Plant defense</keyword>
<keyword id="KW-1185">Reference proteome</keyword>
<keyword id="KW-0694">RNA-binding</keyword>
<keyword id="KW-0943">RNA-mediated gene silencing</keyword>
<keyword id="KW-0808">Transferase</keyword>
<feature type="chain" id="PRO_0000434979" description="Protein MICRORCHIDIA 4">
    <location>
        <begin position="1"/>
        <end position="800"/>
    </location>
</feature>
<feature type="region of interest" description="Disordered" evidence="4">
    <location>
        <begin position="1"/>
        <end position="76"/>
    </location>
</feature>
<feature type="region of interest" description="Disordered" evidence="4">
    <location>
        <begin position="552"/>
        <end position="702"/>
    </location>
</feature>
<feature type="coiled-coil region" evidence="2">
    <location>
        <begin position="699"/>
        <end position="766"/>
    </location>
</feature>
<feature type="short sequence motif" description="Nuclear localization signal 1" evidence="3">
    <location>
        <begin position="716"/>
        <end position="723"/>
    </location>
</feature>
<feature type="short sequence motif" description="Nuclear localization signal 2" evidence="3">
    <location>
        <begin position="735"/>
        <end position="742"/>
    </location>
</feature>
<feature type="compositionally biased region" description="Polar residues" evidence="4">
    <location>
        <begin position="9"/>
        <end position="18"/>
    </location>
</feature>
<feature type="compositionally biased region" description="Low complexity" evidence="4">
    <location>
        <begin position="36"/>
        <end position="47"/>
    </location>
</feature>
<feature type="compositionally biased region" description="Basic and acidic residues" evidence="4">
    <location>
        <begin position="559"/>
        <end position="578"/>
    </location>
</feature>
<feature type="compositionally biased region" description="Basic and acidic residues" evidence="4">
    <location>
        <begin position="628"/>
        <end position="641"/>
    </location>
</feature>
<feature type="compositionally biased region" description="Acidic residues" evidence="4">
    <location>
        <begin position="666"/>
        <end position="675"/>
    </location>
</feature>
<name>MORC4_ARATH</name>
<protein>
    <recommendedName>
        <fullName evidence="7">Protein MICRORCHIDIA 4</fullName>
        <shortName evidence="7">AtMORC4</shortName>
        <ecNumber>3.6.-.-</ecNumber>
    </recommendedName>
    <alternativeName>
        <fullName evidence="6">Protein CRT1-homolog 4</fullName>
        <shortName evidence="6">CRT1-h4</shortName>
    </alternativeName>
</protein>
<sequence length="800" mass="89695">MEPIVKQENPVTTSTLSTWKPAARNKTIPPPESVIELSSSNEGSELGENLDEIAEIQSVDRTGGDDVSGTKRARSDSIASPAKRLAVMIPDDDEEFLLSTTSGQAILALPATPCNVVAAPSSWGSCKQFWKAGDYEGTSGGDWEVSAGGFDHVRVHPKFLHSNATSHKWSLGAFAELLDNALDEVRSGATFVNVDMIQNRKDGSKMILIEDNGGGMNPEKMRHCMSLGYSAKSKLADTIGQYGNGFKTSTMRLGADVIVFSRCLGKDGKSSTQSIGLLSYTFLKSTGKEDIVVPMLDYERRDSEWCPITRSSVSDWEKNVETVVQWSPYATEEELLCQFNLMKKHGTRIIIYNLWEDDEGMLELDFDTDPHDIQLRGVNRDDKNIVMASQFPNSRHYLTYKHSLRSYASILYLKISHEFRIILRGKDVEHHNIVNDMMQTEKITYRPKEAADVSQLSAVVTIGFVKDAKHHVDVQGFNVYHKNRLIKPFWRIWNAAGSDGRGVIGVLEANFVEPAHDKQGFERTTVLSRLEARLLHMQKDYWRSKCHKIGYAKRQGRKSAKDTEKDTEDRESSPEFDPKGSASSRKRTVPSSFKTPTAAPRFNTPTAASEKFNPRSNVNGGGKGSVKVSKDIGYKSSEKGGKLGNSFSKSNKRAKPQGARAVEVTNSDDDYDCDSSPERNVTELPGKSSELPKPQSGPRTLSQLEQENNELRERLDKKEEVFLLLQKDLRRERELRKTLEAEVETLKNKLKEMDKEQASLIDVFAEDRDRRDKEEENLRIKLEEASNTIQKLIDGKARGR</sequence>
<reference key="1">
    <citation type="journal article" date="2000" name="DNA Res.">
        <title>Structural analysis of Arabidopsis thaliana chromosome 5. X. Sequence features of the regions of 3,076,755 bp covered by sixty P1 and TAC clones.</title>
        <authorList>
            <person name="Sato S."/>
            <person name="Nakamura Y."/>
            <person name="Kaneko T."/>
            <person name="Katoh T."/>
            <person name="Asamizu E."/>
            <person name="Kotani H."/>
            <person name="Tabata S."/>
        </authorList>
    </citation>
    <scope>NUCLEOTIDE SEQUENCE [LARGE SCALE GENOMIC DNA]</scope>
    <source>
        <strain>cv. Columbia</strain>
    </source>
</reference>
<reference key="2">
    <citation type="journal article" date="2017" name="Plant J.">
        <title>Araport11: a complete reannotation of the Arabidopsis thaliana reference genome.</title>
        <authorList>
            <person name="Cheng C.Y."/>
            <person name="Krishnakumar V."/>
            <person name="Chan A.P."/>
            <person name="Thibaud-Nissen F."/>
            <person name="Schobel S."/>
            <person name="Town C.D."/>
        </authorList>
    </citation>
    <scope>GENOME REANNOTATION</scope>
    <scope>SEQUENCE REVISION</scope>
    <source>
        <strain>cv. Columbia</strain>
    </source>
</reference>
<reference key="3">
    <citation type="journal article" date="2008" name="Plant Signal. Behav.">
        <title>The involvement of the Arabidopsis CRT1 ATPase family in disease resistance protein-mediated signaling.</title>
        <authorList>
            <person name="Kang H.-G."/>
            <person name="Klessig D.F."/>
        </authorList>
    </citation>
    <scope>GENE FAMILY</scope>
    <scope>NOMENCLATURE</scope>
</reference>
<reference key="4">
    <citation type="journal article" date="2014" name="Proc. Natl. Acad. Sci. U.S.A.">
        <title>Transcriptional gene silencing by Arabidopsis microrchidia homologues involves the formation of heteromers.</title>
        <authorList>
            <person name="Moissiard G."/>
            <person name="Bischof S."/>
            <person name="Husmann D."/>
            <person name="Pastor W.A."/>
            <person name="Hale C.J."/>
            <person name="Yen L."/>
            <person name="Stroud H."/>
            <person name="Papikian A."/>
            <person name="Vashisht A.A."/>
            <person name="Wohlschlegel J.A."/>
            <person name="Jacobsen S.E."/>
        </authorList>
    </citation>
    <scope>GENE FAMILY</scope>
    <scope>NOMENCLATURE</scope>
</reference>
<reference key="5">
    <citation type="journal article" date="2016" name="PLoS Genet.">
        <title>Arabidopsis AtMORC4 and AtMORC7 form nuclear bodies and repress a large number of protein-coding genes.</title>
        <authorList>
            <person name="Harris C.J."/>
            <person name="Husmann D."/>
            <person name="Liu W."/>
            <person name="Kasmi F.E."/>
            <person name="Wang H."/>
            <person name="Papikian A."/>
            <person name="Pastor W.A."/>
            <person name="Moissiard G."/>
            <person name="Vashisht A.A."/>
            <person name="Dangl J.L."/>
            <person name="Wohlschlegel J.A."/>
            <person name="Jacobsen S.E."/>
        </authorList>
    </citation>
    <scope>FUNCTION</scope>
    <scope>DISRUPTION PHENOTYPE</scope>
    <scope>SUBUNIT</scope>
    <scope>SUBCELLULAR LOCATION</scope>
    <source>
        <strain>cv. Columbia</strain>
    </source>
</reference>
<accession>F4KAF2</accession>
<accession>Q9FGW3</accession>